<dbReference type="EMBL" id="AE006468">
    <property type="protein sequence ID" value="AAL19209.1"/>
    <property type="molecule type" value="Genomic_DNA"/>
</dbReference>
<dbReference type="RefSeq" id="WP_001287486.1">
    <property type="nucleotide sequence ID" value="NC_003197.2"/>
</dbReference>
<dbReference type="SMR" id="Q8ZRN0"/>
<dbReference type="STRING" id="99287.STM0246"/>
<dbReference type="PaxDb" id="99287-STM0246"/>
<dbReference type="KEGG" id="stm:STM0246"/>
<dbReference type="PATRIC" id="fig|99287.12.peg.260"/>
<dbReference type="HOGENOM" id="CLU_077375_0_1_6"/>
<dbReference type="PhylomeDB" id="Q8ZRN0"/>
<dbReference type="BioCyc" id="SENT99287:STM0246-MONOMER"/>
<dbReference type="PHI-base" id="PHI:8094"/>
<dbReference type="Proteomes" id="UP000001014">
    <property type="component" value="Chromosome"/>
</dbReference>
<dbReference type="GO" id="GO:0005886">
    <property type="term" value="C:plasma membrane"/>
    <property type="evidence" value="ECO:0000318"/>
    <property type="project" value="GO_Central"/>
</dbReference>
<dbReference type="GO" id="GO:0048473">
    <property type="term" value="P:D-methionine transmembrane transport"/>
    <property type="evidence" value="ECO:0000318"/>
    <property type="project" value="GO_Central"/>
</dbReference>
<dbReference type="CDD" id="cd06261">
    <property type="entry name" value="TM_PBP2"/>
    <property type="match status" value="1"/>
</dbReference>
<dbReference type="FunFam" id="1.10.3720.10:FF:000002">
    <property type="entry name" value="D-methionine ABC transporter permease MetI"/>
    <property type="match status" value="1"/>
</dbReference>
<dbReference type="Gene3D" id="1.10.3720.10">
    <property type="entry name" value="MetI-like"/>
    <property type="match status" value="1"/>
</dbReference>
<dbReference type="InterPro" id="IPR051322">
    <property type="entry name" value="AA_ABC_Transporter_Permease"/>
</dbReference>
<dbReference type="InterPro" id="IPR000515">
    <property type="entry name" value="MetI-like"/>
</dbReference>
<dbReference type="InterPro" id="IPR035906">
    <property type="entry name" value="MetI-like_sf"/>
</dbReference>
<dbReference type="NCBIfam" id="NF008049">
    <property type="entry name" value="PRK10782.1"/>
    <property type="match status" value="1"/>
</dbReference>
<dbReference type="PANTHER" id="PTHR30450">
    <property type="entry name" value="ABC TRANSPORTER PERMEASE"/>
    <property type="match status" value="1"/>
</dbReference>
<dbReference type="PANTHER" id="PTHR30450:SF8">
    <property type="entry name" value="D-METHIONINE TRANSPORT SYSTEM PERMEASE PROTEIN METI"/>
    <property type="match status" value="1"/>
</dbReference>
<dbReference type="Pfam" id="PF00528">
    <property type="entry name" value="BPD_transp_1"/>
    <property type="match status" value="1"/>
</dbReference>
<dbReference type="SUPFAM" id="SSF161098">
    <property type="entry name" value="MetI-like"/>
    <property type="match status" value="1"/>
</dbReference>
<dbReference type="PROSITE" id="PS50928">
    <property type="entry name" value="ABC_TM1"/>
    <property type="match status" value="1"/>
</dbReference>
<comment type="function">
    <text evidence="1">Part of the binding-protein-dependent transport system for D-methionine and the toxic methionine analog alpha-methyl-methionine. Probably responsible for the translocation of the substrate across the membrane (By similarity).</text>
</comment>
<comment type="subcellular location">
    <subcellularLocation>
        <location evidence="1">Cell inner membrane</location>
        <topology evidence="3">Multi-pass membrane protein</topology>
    </subcellularLocation>
</comment>
<comment type="similarity">
    <text evidence="4">Belongs to the binding-protein-dependent transport system permease family. CysTW subfamily.</text>
</comment>
<protein>
    <recommendedName>
        <fullName>D-methionine transport system permease protein MetI</fullName>
    </recommendedName>
</protein>
<evidence type="ECO:0000250" key="1"/>
<evidence type="ECO:0000255" key="2"/>
<evidence type="ECO:0000255" key="3">
    <source>
        <dbReference type="PROSITE-ProRule" id="PRU00441"/>
    </source>
</evidence>
<evidence type="ECO:0000305" key="4"/>
<accession>Q8ZRN0</accession>
<gene>
    <name type="primary">metI</name>
    <name type="ordered locus">STM0246</name>
</gene>
<proteinExistence type="inferred from homology"/>
<name>METI_SALTY</name>
<keyword id="KW-0029">Amino-acid transport</keyword>
<keyword id="KW-0997">Cell inner membrane</keyword>
<keyword id="KW-1003">Cell membrane</keyword>
<keyword id="KW-0472">Membrane</keyword>
<keyword id="KW-1185">Reference proteome</keyword>
<keyword id="KW-0812">Transmembrane</keyword>
<keyword id="KW-1133">Transmembrane helix</keyword>
<keyword id="KW-0813">Transport</keyword>
<organism>
    <name type="scientific">Salmonella typhimurium (strain LT2 / SGSC1412 / ATCC 700720)</name>
    <dbReference type="NCBI Taxonomy" id="99287"/>
    <lineage>
        <taxon>Bacteria</taxon>
        <taxon>Pseudomonadati</taxon>
        <taxon>Pseudomonadota</taxon>
        <taxon>Gammaproteobacteria</taxon>
        <taxon>Enterobacterales</taxon>
        <taxon>Enterobacteriaceae</taxon>
        <taxon>Salmonella</taxon>
    </lineage>
</organism>
<sequence length="217" mass="23249">MSEAMMWLLVRGVWETLAMTFVSGFFGFVIGLPVGVLLYVTRPGQIMENARLYRSLSAVVNIFRSIPFIILLVWMIPFTRIIVGTSIGLQAAIVPLTVGAAPFIARMVENALLEIPAGLIEASRAMGATPLQIVRKILLPEALPGLVNAATITLITLVGYSAMGGAVGAGGLGQIGYQYGYIGYNATVMNTVLVLLVVLVYLIQLSGDRIVRAVTHK</sequence>
<reference key="1">
    <citation type="journal article" date="2001" name="Nature">
        <title>Complete genome sequence of Salmonella enterica serovar Typhimurium LT2.</title>
        <authorList>
            <person name="McClelland M."/>
            <person name="Sanderson K.E."/>
            <person name="Spieth J."/>
            <person name="Clifton S.W."/>
            <person name="Latreille P."/>
            <person name="Courtney L."/>
            <person name="Porwollik S."/>
            <person name="Ali J."/>
            <person name="Dante M."/>
            <person name="Du F."/>
            <person name="Hou S."/>
            <person name="Layman D."/>
            <person name="Leonard S."/>
            <person name="Nguyen C."/>
            <person name="Scott K."/>
            <person name="Holmes A."/>
            <person name="Grewal N."/>
            <person name="Mulvaney E."/>
            <person name="Ryan E."/>
            <person name="Sun H."/>
            <person name="Florea L."/>
            <person name="Miller W."/>
            <person name="Stoneking T."/>
            <person name="Nhan M."/>
            <person name="Waterston R."/>
            <person name="Wilson R.K."/>
        </authorList>
    </citation>
    <scope>NUCLEOTIDE SEQUENCE [LARGE SCALE GENOMIC DNA]</scope>
    <source>
        <strain>LT2 / SGSC1412 / ATCC 700720</strain>
    </source>
</reference>
<feature type="chain" id="PRO_0000060101" description="D-methionine transport system permease protein MetI">
    <location>
        <begin position="1"/>
        <end position="217"/>
    </location>
</feature>
<feature type="topological domain" description="Periplasmic" evidence="2">
    <location>
        <begin position="1"/>
        <end position="19"/>
    </location>
</feature>
<feature type="transmembrane region" description="Helical" evidence="3">
    <location>
        <begin position="20"/>
        <end position="40"/>
    </location>
</feature>
<feature type="topological domain" description="Cytoplasmic" evidence="2">
    <location>
        <begin position="41"/>
        <end position="54"/>
    </location>
</feature>
<feature type="transmembrane region" description="Helical" evidence="3">
    <location>
        <begin position="55"/>
        <end position="77"/>
    </location>
</feature>
<feature type="topological domain" description="Periplasmic" evidence="2">
    <location>
        <begin position="78"/>
        <end position="92"/>
    </location>
</feature>
<feature type="transmembrane region" description="Helical" evidence="3">
    <location>
        <begin position="93"/>
        <end position="113"/>
    </location>
</feature>
<feature type="topological domain" description="Cytoplasmic" evidence="2">
    <location>
        <begin position="114"/>
        <end position="151"/>
    </location>
</feature>
<feature type="transmembrane region" description="Helical" evidence="3">
    <location>
        <begin position="152"/>
        <end position="172"/>
    </location>
</feature>
<feature type="topological domain" description="Periplasmic" evidence="2">
    <location>
        <begin position="173"/>
        <end position="185"/>
    </location>
</feature>
<feature type="transmembrane region" description="Helical" evidence="3">
    <location>
        <begin position="186"/>
        <end position="206"/>
    </location>
</feature>
<feature type="topological domain" description="Cytoplasmic" evidence="2">
    <location>
        <begin position="207"/>
        <end position="217"/>
    </location>
</feature>
<feature type="domain" description="ABC transmembrane type-1" evidence="3">
    <location>
        <begin position="13"/>
        <end position="204"/>
    </location>
</feature>